<accession>P60227</accession>
<accession>D9PXZ8</accession>
<gene>
    <name type="primary">mvhA</name>
    <name type="ordered locus">MTBMA_c15170</name>
</gene>
<comment type="function">
    <text evidence="2">Part of a complex that provides reducing equivalents for heterodisulfide reductase.</text>
</comment>
<comment type="cofactor">
    <cofactor evidence="4">
        <name>Ni(2+)</name>
        <dbReference type="ChEBI" id="CHEBI:49786"/>
    </cofactor>
</comment>
<comment type="subunit">
    <text evidence="3">The F420-non-reducing hydrogenase is composed of three subunits; MvhA, MvhD and MvhG. It forms a complex with the heterodisulfide reductase (hdr).</text>
</comment>
<comment type="similarity">
    <text evidence="4">Belongs to the [NiFe]/[NiFeSe] hydrogenase large subunit family.</text>
</comment>
<protein>
    <recommendedName>
        <fullName>F420-non-reducing hydrogenase subunit A</fullName>
        <ecNumber>1.12.99.-</ecNumber>
    </recommendedName>
    <alternativeName>
        <fullName>Methyl viologen-reducing hydrogenase subunit alpha</fullName>
        <shortName>MVH subunit A</shortName>
    </alternativeName>
</protein>
<evidence type="ECO:0000255" key="1"/>
<evidence type="ECO:0000269" key="2">
    <source>
    </source>
</evidence>
<evidence type="ECO:0000269" key="3">
    <source>
    </source>
</evidence>
<evidence type="ECO:0000305" key="4"/>
<dbReference type="EC" id="1.12.99.-"/>
<dbReference type="EMBL" id="CP001710">
    <property type="protein sequence ID" value="ADL59096.1"/>
    <property type="molecule type" value="Genomic_DNA"/>
</dbReference>
<dbReference type="RefSeq" id="WP_013296307.1">
    <property type="nucleotide sequence ID" value="NC_014408.1"/>
</dbReference>
<dbReference type="SMR" id="P60227"/>
<dbReference type="DIP" id="DIP-59603N"/>
<dbReference type="IntAct" id="P60227">
    <property type="interactions" value="1"/>
</dbReference>
<dbReference type="STRING" id="79929.MTBMA_c15170"/>
<dbReference type="TCDB" id="3.D.7.2.4">
    <property type="family name" value="the h2:heterodisulfide oxidoreductase (hho) family"/>
</dbReference>
<dbReference type="PaxDb" id="79929-MTBMA_c15170"/>
<dbReference type="GeneID" id="43707759"/>
<dbReference type="GeneID" id="9705226"/>
<dbReference type="KEGG" id="mmg:MTBMA_c15170"/>
<dbReference type="PATRIC" id="fig|79929.8.peg.1470"/>
<dbReference type="HOGENOM" id="CLU_044556_0_0_2"/>
<dbReference type="OrthoDB" id="42371at2157"/>
<dbReference type="Proteomes" id="UP000000345">
    <property type="component" value="Chromosome"/>
</dbReference>
<dbReference type="GO" id="GO:0008901">
    <property type="term" value="F:ferredoxin hydrogenase activity"/>
    <property type="evidence" value="ECO:0007669"/>
    <property type="project" value="InterPro"/>
</dbReference>
<dbReference type="GO" id="GO:0016151">
    <property type="term" value="F:nickel cation binding"/>
    <property type="evidence" value="ECO:0007669"/>
    <property type="project" value="InterPro"/>
</dbReference>
<dbReference type="Gene3D" id="1.10.645.10">
    <property type="entry name" value="Cytochrome-c3 Hydrogenase, chain B"/>
    <property type="match status" value="1"/>
</dbReference>
<dbReference type="InterPro" id="IPR001501">
    <property type="entry name" value="Ni-dep_hyd_lsu"/>
</dbReference>
<dbReference type="InterPro" id="IPR018194">
    <property type="entry name" value="Ni-dep_hyd_lsu_Ni_BS"/>
</dbReference>
<dbReference type="InterPro" id="IPR029014">
    <property type="entry name" value="NiFe-Hase_large"/>
</dbReference>
<dbReference type="PANTHER" id="PTHR43600">
    <property type="entry name" value="COENZYME F420 HYDROGENASE, SUBUNIT ALPHA"/>
    <property type="match status" value="1"/>
</dbReference>
<dbReference type="PANTHER" id="PTHR43600:SF2">
    <property type="entry name" value="F420-NON-REDUCING HYDROGENASE VHU SUBUNIT A"/>
    <property type="match status" value="1"/>
</dbReference>
<dbReference type="Pfam" id="PF00374">
    <property type="entry name" value="NiFeSe_Hases"/>
    <property type="match status" value="2"/>
</dbReference>
<dbReference type="SUPFAM" id="SSF56762">
    <property type="entry name" value="HydB/Nqo4-like"/>
    <property type="match status" value="1"/>
</dbReference>
<dbReference type="PROSITE" id="PS00507">
    <property type="entry name" value="NI_HGENASE_L_1"/>
    <property type="match status" value="1"/>
</dbReference>
<dbReference type="PROSITE" id="PS00508">
    <property type="entry name" value="NI_HGENASE_L_2"/>
    <property type="match status" value="1"/>
</dbReference>
<organism>
    <name type="scientific">Methanothermobacter marburgensis (strain ATCC BAA-927 / DSM 2133 / JCM 14651 / NBRC 100331 / OCM 82 / Marburg)</name>
    <name type="common">Methanobacterium thermoautotrophicum</name>
    <dbReference type="NCBI Taxonomy" id="79929"/>
    <lineage>
        <taxon>Archaea</taxon>
        <taxon>Methanobacteriati</taxon>
        <taxon>Methanobacteriota</taxon>
        <taxon>Methanomada group</taxon>
        <taxon>Methanobacteria</taxon>
        <taxon>Methanobacteriales</taxon>
        <taxon>Methanobacteriaceae</taxon>
        <taxon>Methanothermobacter</taxon>
    </lineage>
</organism>
<reference key="1">
    <citation type="journal article" date="2010" name="J. Bacteriol.">
        <title>Complete genome sequence of Methanothermobacter marburgensis, a methanoarchaeon model organism.</title>
        <authorList>
            <person name="Liesegang H."/>
            <person name="Kaster A.K."/>
            <person name="Wiezer A."/>
            <person name="Goenrich M."/>
            <person name="Wollherr A."/>
            <person name="Seedorf H."/>
            <person name="Gottschalk G."/>
            <person name="Thauer R.K."/>
        </authorList>
    </citation>
    <scope>NUCLEOTIDE SEQUENCE [LARGE SCALE GENOMIC DNA]</scope>
    <source>
        <strain>ATCC BAA-927 / DSM 2133 / JCM 14651 / NBRC 100331 / OCM 82 / Marburg</strain>
    </source>
</reference>
<reference key="2">
    <citation type="journal article" date="1994" name="Eur. J. Biochem.">
        <title>H2: heterodisulfide oxidoreductase complex from Methanobacterium thermoautotrophicum. Composition and properties.</title>
        <authorList>
            <person name="Setzke E."/>
            <person name="Hedderich R."/>
            <person name="Heiden S."/>
            <person name="Thauer R.K."/>
        </authorList>
    </citation>
    <scope>PROTEIN SEQUENCE OF 2-18</scope>
    <scope>SUBUNIT</scope>
    <scope>ASSOCIATION WITH HETERODISULFIDE REDUCTASE</scope>
    <source>
        <strain>ATCC BAA-927 / DSM 2133 / JCM 14651 / NBRC 100331 / OCM 82 / Marburg</strain>
    </source>
</reference>
<reference key="3">
    <citation type="journal article" date="2003" name="Arch. Microbiol.">
        <title>Physiological role of the F420-non-reducing hydrogenase (Mvh) from Methanothermobacter marburgensis.</title>
        <authorList>
            <person name="Stojanowic A."/>
            <person name="Mander G.J."/>
            <person name="Duin E.C."/>
            <person name="Hedderich R."/>
        </authorList>
    </citation>
    <scope>FUNCTION</scope>
    <scope>ASSOCIATION WITH HETERODISULFIDE REDUCTASE</scope>
    <source>
        <strain>ATCC BAA-927 / DSM 2133 / JCM 14651 / NBRC 100331 / OCM 82 / Marburg</strain>
    </source>
</reference>
<proteinExistence type="evidence at protein level"/>
<feature type="initiator methionine" description="Removed" evidence="3">
    <location>
        <position position="1"/>
    </location>
</feature>
<feature type="chain" id="PRO_0000199727" description="F420-non-reducing hydrogenase subunit A">
    <location>
        <begin position="2"/>
        <end position="472"/>
    </location>
</feature>
<feature type="binding site" evidence="1">
    <location>
        <position position="61"/>
    </location>
    <ligand>
        <name>Ni(2+)</name>
        <dbReference type="ChEBI" id="CHEBI:49786"/>
    </ligand>
</feature>
<feature type="binding site" evidence="1">
    <location>
        <position position="64"/>
    </location>
    <ligand>
        <name>Ni(2+)</name>
        <dbReference type="ChEBI" id="CHEBI:49786"/>
    </ligand>
</feature>
<feature type="binding site" evidence="1">
    <location>
        <position position="442"/>
    </location>
    <ligand>
        <name>Ni(2+)</name>
        <dbReference type="ChEBI" id="CHEBI:49786"/>
    </ligand>
</feature>
<feature type="binding site" evidence="1">
    <location>
        <position position="445"/>
    </location>
    <ligand>
        <name>Ni(2+)</name>
        <dbReference type="ChEBI" id="CHEBI:49786"/>
    </ligand>
</feature>
<feature type="sequence conflict" description="In Ref. 2; AA sequence." evidence="4" ref="2">
    <original>R</original>
    <variation>L</variation>
    <location>
        <position position="11"/>
    </location>
</feature>
<sequence length="472" mass="52839">MVKLTMEPVTRIEGHAKITVHLDDAGNVEDTRLHVMEFRGFEKFLQGRPIEEAPRIVPRICGICDVQHHLAAAKAVDACFGFEPDDVLPAAYKMREIMNWGSYMHSHGLHFYFLAAPDFIAGKDRKTRNVFQIIKDAPDVALQAIELRKNALEIVRATGGRPIHPTSSTPGGISTELDDETQKDLLQKAQRNVELAEATLELAVPIFEENIDLVNSLGNIETYHTGLVKNGVWDVYDGIVRIKDKEGNLFREFKPADYADTIAEHVKPYSWLKFPYIKDLGYPDGVYRVSPLSRLNVADKMPDAAPKAQDYFKEFQDKFGYAQQTLLYHWARLIEVLACAECAADALEGDLSGEKFPDSLERQAGDGVGIVEAPRGTLTHHYTCDENGLITKANIVVATIQNNPAMEMGIQKVAQDYIKPGVEVDDKIFNLMEMVIRAYDPCLSCATHTIDSQMRLATLEVYDSEGDLVKRI</sequence>
<name>MVHA_METTM</name>
<keyword id="KW-0903">Direct protein sequencing</keyword>
<keyword id="KW-0479">Metal-binding</keyword>
<keyword id="KW-0533">Nickel</keyword>
<keyword id="KW-0560">Oxidoreductase</keyword>